<sequence>MADTPSVAVQAPPGYGKTELFHLPLIALASKGDVEYVSFLFVPYTVLLANCMIRLGRCGCLNVAPVRNFIEEGCDGVTDLYVGIYDDLASTNFTDRIAAWENIVECTFRTNNVKLGYLIVDELHNFETEVYRQSQFGGITNLDFDAFEKAIFLSGTAPEAVADAALQRIGLTGLAKKSMDINELKRSEDLSRGLSSYPTRMFNLIKEKSKVPLGTNATTTASTNVRTSATTTASINVRTSATTTASINVRTSATTTESTNSNTNATTTESTNSSTNATTTASTNSSTNATTTESTNASAKEDANKDGNAEDNRFHPVTDINKEPYKRKGSQMVLLERKKLKAQFPNTSENMNVLQFLGFRSDEIKHLFLYGIDIYFCPEGVFTQYGLCKGCQKMFELCVCWAGQKVSYRRMAWEALAVERMLRNDEEYKEYLEDIEPYHGDPVGYLKFFSVKRREIYSQIQRNYAWYLAITRRRETISVLDSTRGKQGSQVFRMSGRQIKELYYKVWSNLRESKTEVLQYFLNWDEKKCQEEWEAKDDTVFVEALEKVGVFQRLRSMTSAGLQGPQYVKLQFSRHHRQLRSRYELSLGMHLRDQLALGVTPSKVPHWTAFLSMLIGLFYNKTFRQKLEYLLEQISEVWLLPHWLDLANVEVLAADNTRVPLYMLMVAVHKELDSDDVPDGRFDIILLCRDSSREVGE</sequence>
<keyword id="KW-0472">Membrane</keyword>
<keyword id="KW-1185">Reference proteome</keyword>
<keyword id="KW-0812">Transmembrane</keyword>
<keyword id="KW-1133">Transmembrane helix</keyword>
<accession>P38721</accession>
<accession>D3DKS0</accession>
<organism>
    <name type="scientific">Saccharomyces cerevisiae (strain ATCC 204508 / S288c)</name>
    <name type="common">Baker's yeast</name>
    <dbReference type="NCBI Taxonomy" id="559292"/>
    <lineage>
        <taxon>Eukaryota</taxon>
        <taxon>Fungi</taxon>
        <taxon>Dikarya</taxon>
        <taxon>Ascomycota</taxon>
        <taxon>Saccharomycotina</taxon>
        <taxon>Saccharomycetes</taxon>
        <taxon>Saccharomycetales</taxon>
        <taxon>Saccharomycetaceae</taxon>
        <taxon>Saccharomyces</taxon>
    </lineage>
</organism>
<name>YHF0_YEAST</name>
<protein>
    <recommendedName>
        <fullName>Uncharacterized protein YHL050C</fullName>
    </recommendedName>
</protein>
<dbReference type="EMBL" id="U11583">
    <property type="protein sequence ID" value="AAB65038.1"/>
    <property type="molecule type" value="Genomic_DNA"/>
</dbReference>
<dbReference type="EMBL" id="BK006934">
    <property type="protein sequence ID" value="DAA06637.1"/>
    <property type="molecule type" value="Genomic_DNA"/>
</dbReference>
<dbReference type="PIR" id="S48964">
    <property type="entry name" value="S48964"/>
</dbReference>
<dbReference type="RefSeq" id="NP_011813.1">
    <property type="nucleotide sequence ID" value="NM_001179130.1"/>
</dbReference>
<dbReference type="BioGRID" id="36375">
    <property type="interactions" value="5"/>
</dbReference>
<dbReference type="DIP" id="DIP-7155N"/>
<dbReference type="FunCoup" id="P38721">
    <property type="interactions" value="150"/>
</dbReference>
<dbReference type="STRING" id="4932.YHL050C"/>
<dbReference type="PaxDb" id="4932-YHL050C"/>
<dbReference type="PeptideAtlas" id="P38721"/>
<dbReference type="TopDownProteomics" id="P38721"/>
<dbReference type="EnsemblFungi" id="YHL050C_mRNA">
    <property type="protein sequence ID" value="YHL050C"/>
    <property type="gene ID" value="YHL050C"/>
</dbReference>
<dbReference type="GeneID" id="856335"/>
<dbReference type="KEGG" id="sce:YHL050C"/>
<dbReference type="AGR" id="SGD:S000001042"/>
<dbReference type="SGD" id="S000001042">
    <property type="gene designation" value="YHL050C"/>
</dbReference>
<dbReference type="VEuPathDB" id="FungiDB:YHL050C"/>
<dbReference type="eggNOG" id="ENOG502QWCT">
    <property type="taxonomic scope" value="Eukaryota"/>
</dbReference>
<dbReference type="GeneTree" id="ENSGT00940000153173"/>
<dbReference type="HOGENOM" id="CLU_011178_2_0_1"/>
<dbReference type="InParanoid" id="P38721"/>
<dbReference type="OrthoDB" id="4060407at2759"/>
<dbReference type="BioCyc" id="YEAST:G3O-31066-MONOMER"/>
<dbReference type="BioGRID-ORCS" id="856335">
    <property type="hits" value="0 hits in 10 CRISPR screens"/>
</dbReference>
<dbReference type="PRO" id="PR:P38721"/>
<dbReference type="Proteomes" id="UP000002311">
    <property type="component" value="Chromosome VIII"/>
</dbReference>
<dbReference type="RNAct" id="P38721">
    <property type="molecule type" value="protein"/>
</dbReference>
<dbReference type="GO" id="GO:0005737">
    <property type="term" value="C:cytoplasm"/>
    <property type="evidence" value="ECO:0000318"/>
    <property type="project" value="GO_Central"/>
</dbReference>
<dbReference type="GO" id="GO:0016020">
    <property type="term" value="C:membrane"/>
    <property type="evidence" value="ECO:0007669"/>
    <property type="project" value="UniProtKB-SubCell"/>
</dbReference>
<dbReference type="GO" id="GO:0005524">
    <property type="term" value="F:ATP binding"/>
    <property type="evidence" value="ECO:0007669"/>
    <property type="project" value="InterPro"/>
</dbReference>
<dbReference type="GO" id="GO:0004386">
    <property type="term" value="F:helicase activity"/>
    <property type="evidence" value="ECO:0000250"/>
    <property type="project" value="SGD"/>
</dbReference>
<dbReference type="GO" id="GO:0003676">
    <property type="term" value="F:nucleic acid binding"/>
    <property type="evidence" value="ECO:0007669"/>
    <property type="project" value="InterPro"/>
</dbReference>
<dbReference type="FunFam" id="3.40.50.300:FF:001914">
    <property type="entry name" value="YML133C-like protein"/>
    <property type="match status" value="1"/>
</dbReference>
<dbReference type="Gene3D" id="3.40.50.300">
    <property type="entry name" value="P-loop containing nucleotide triphosphate hydrolases"/>
    <property type="match status" value="1"/>
</dbReference>
<dbReference type="InterPro" id="IPR011545">
    <property type="entry name" value="DEAD/DEAH_box_helicase_dom"/>
</dbReference>
<dbReference type="InterPro" id="IPR027417">
    <property type="entry name" value="P-loop_NTPase"/>
</dbReference>
<dbReference type="InterPro" id="IPR051363">
    <property type="entry name" value="RLR_Helicase"/>
</dbReference>
<dbReference type="PANTHER" id="PTHR14074:SF39">
    <property type="entry name" value="FANCONI ANEMIA GROUP M PROTEIN"/>
    <property type="match status" value="1"/>
</dbReference>
<dbReference type="PANTHER" id="PTHR14074">
    <property type="entry name" value="HELICASE WITH DEATH DOMAIN-RELATED"/>
    <property type="match status" value="1"/>
</dbReference>
<dbReference type="Pfam" id="PF00270">
    <property type="entry name" value="DEAD"/>
    <property type="match status" value="1"/>
</dbReference>
<dbReference type="SUPFAM" id="SSF52540">
    <property type="entry name" value="P-loop containing nucleoside triphosphate hydrolases"/>
    <property type="match status" value="1"/>
</dbReference>
<dbReference type="PROSITE" id="PS00690">
    <property type="entry name" value="DEAH_ATP_HELICASE"/>
    <property type="match status" value="1"/>
</dbReference>
<gene>
    <name type="ordered locus">YHL050C</name>
</gene>
<reference key="1">
    <citation type="journal article" date="1994" name="Science">
        <title>Complete nucleotide sequence of Saccharomyces cerevisiae chromosome VIII.</title>
        <authorList>
            <person name="Johnston M."/>
            <person name="Andrews S."/>
            <person name="Brinkman R."/>
            <person name="Cooper J."/>
            <person name="Ding H."/>
            <person name="Dover J."/>
            <person name="Du Z."/>
            <person name="Favello A."/>
            <person name="Fulton L."/>
            <person name="Gattung S."/>
            <person name="Geisel C."/>
            <person name="Kirsten J."/>
            <person name="Kucaba T."/>
            <person name="Hillier L.W."/>
            <person name="Jier M."/>
            <person name="Johnston L."/>
            <person name="Langston Y."/>
            <person name="Latreille P."/>
            <person name="Louis E.J."/>
            <person name="Macri C."/>
            <person name="Mardis E."/>
            <person name="Menezes S."/>
            <person name="Mouser L."/>
            <person name="Nhan M."/>
            <person name="Rifkin L."/>
            <person name="Riles L."/>
            <person name="St Peter H."/>
            <person name="Trevaskis E."/>
            <person name="Vaughan K."/>
            <person name="Vignati D."/>
            <person name="Wilcox L."/>
            <person name="Wohldman P."/>
            <person name="Waterston R."/>
            <person name="Wilson R."/>
            <person name="Vaudin M."/>
        </authorList>
    </citation>
    <scope>NUCLEOTIDE SEQUENCE [LARGE SCALE GENOMIC DNA]</scope>
    <source>
        <strain>ATCC 204508 / S288c</strain>
    </source>
</reference>
<reference key="2">
    <citation type="journal article" date="2014" name="G3 (Bethesda)">
        <title>The reference genome sequence of Saccharomyces cerevisiae: Then and now.</title>
        <authorList>
            <person name="Engel S.R."/>
            <person name="Dietrich F.S."/>
            <person name="Fisk D.G."/>
            <person name="Binkley G."/>
            <person name="Balakrishnan R."/>
            <person name="Costanzo M.C."/>
            <person name="Dwight S.S."/>
            <person name="Hitz B.C."/>
            <person name="Karra K."/>
            <person name="Nash R.S."/>
            <person name="Weng S."/>
            <person name="Wong E.D."/>
            <person name="Lloyd P."/>
            <person name="Skrzypek M.S."/>
            <person name="Miyasato S.R."/>
            <person name="Simison M."/>
            <person name="Cherry J.M."/>
        </authorList>
    </citation>
    <scope>GENOME REANNOTATION</scope>
    <source>
        <strain>ATCC 204508 / S288c</strain>
    </source>
</reference>
<feature type="chain" id="PRO_0000202875" description="Uncharacterized protein YHL050C">
    <location>
        <begin position="1"/>
        <end position="697"/>
    </location>
</feature>
<feature type="transmembrane region" description="Helical" evidence="1">
    <location>
        <begin position="65"/>
        <end position="85"/>
    </location>
</feature>
<feature type="transmembrane region" description="Helical" evidence="1">
    <location>
        <begin position="106"/>
        <end position="126"/>
    </location>
</feature>
<feature type="transmembrane region" description="Helical" evidence="1">
    <location>
        <begin position="131"/>
        <end position="151"/>
    </location>
</feature>
<feature type="transmembrane region" description="Helical" evidence="1">
    <location>
        <begin position="163"/>
        <end position="183"/>
    </location>
</feature>
<feature type="transmembrane region" description="Helical" evidence="1">
    <location>
        <begin position="194"/>
        <end position="214"/>
    </location>
</feature>
<feature type="transmembrane region" description="Helical" evidence="1">
    <location>
        <begin position="227"/>
        <end position="247"/>
    </location>
</feature>
<feature type="transmembrane region" description="Helical" evidence="1">
    <location>
        <begin position="286"/>
        <end position="306"/>
    </location>
</feature>
<feature type="transmembrane region" description="Helical" evidence="1">
    <location>
        <begin position="316"/>
        <end position="336"/>
    </location>
</feature>
<feature type="transmembrane region" description="Helical" evidence="1">
    <location>
        <begin position="361"/>
        <end position="381"/>
    </location>
</feature>
<feature type="transmembrane region" description="Helical" evidence="1">
    <location>
        <begin position="394"/>
        <end position="414"/>
    </location>
</feature>
<feature type="transmembrane region" description="Helical" evidence="1">
    <location>
        <begin position="419"/>
        <end position="439"/>
    </location>
</feature>
<feature type="transmembrane region" description="Helical" evidence="1">
    <location>
        <begin position="450"/>
        <end position="470"/>
    </location>
</feature>
<feature type="transmembrane region" description="Helical" evidence="1">
    <location>
        <begin position="487"/>
        <end position="507"/>
    </location>
</feature>
<feature type="transmembrane region" description="Helical" evidence="1">
    <location>
        <begin position="558"/>
        <end position="578"/>
    </location>
</feature>
<feature type="region of interest" description="Disordered" evidence="2">
    <location>
        <begin position="246"/>
        <end position="321"/>
    </location>
</feature>
<feature type="compositionally biased region" description="Low complexity" evidence="2">
    <location>
        <begin position="251"/>
        <end position="298"/>
    </location>
</feature>
<feature type="compositionally biased region" description="Basic and acidic residues" evidence="2">
    <location>
        <begin position="299"/>
        <end position="321"/>
    </location>
</feature>
<evidence type="ECO:0000255" key="1"/>
<evidence type="ECO:0000256" key="2">
    <source>
        <dbReference type="SAM" id="MobiDB-lite"/>
    </source>
</evidence>
<evidence type="ECO:0000305" key="3"/>
<comment type="subcellular location">
    <subcellularLocation>
        <location evidence="3">Membrane</location>
        <topology evidence="3">Multi-pass membrane protein</topology>
    </subcellularLocation>
</comment>
<proteinExistence type="predicted"/>